<sequence>MQWTKSEQLYEEALRHIVGGVNSPSRSYKAVGGGAPVVMERAQGAYFWDVDGNKYIDYLAAYGPIITGHAHPHITAAIQRAAETGVLYGTPTPHEITFAKMLKEAIPSLEKVRFVNSGTEAVMTTIRVARAYTGRSKIVKFAGCYHGHSDLVLVAAGSGPSTLGTPDSAGVPQSIAHEVITVPYNDVESFREAMNVWGEHVAAVLVEPIVGNFGIVLPKPGFLEAVNDIAHEAGALVIYDEVITAFRFMYGGAQNLLGIEPDMTAMGKIIGGGLPIGAYGGRQDIMEQVAPLGPAYQAGTMAGNPASMLAGIACLEVLKQEGVYEHLDRLGAMLEEGIMTHARQCGLPVTINRLKGALTVFFTEEKVENYEQAQRSDGELFAKFFKLMLKQGVNLAPSKYEAWFITLAHTEDDIAYTIDAVGRAFRQL</sequence>
<comment type="catalytic activity">
    <reaction evidence="1">
        <text>(S)-4-amino-5-oxopentanoate = 5-aminolevulinate</text>
        <dbReference type="Rhea" id="RHEA:14265"/>
        <dbReference type="ChEBI" id="CHEBI:57501"/>
        <dbReference type="ChEBI" id="CHEBI:356416"/>
        <dbReference type="EC" id="5.4.3.8"/>
    </reaction>
</comment>
<comment type="cofactor">
    <cofactor evidence="1">
        <name>pyridoxal 5'-phosphate</name>
        <dbReference type="ChEBI" id="CHEBI:597326"/>
    </cofactor>
</comment>
<comment type="pathway">
    <text evidence="1">Porphyrin-containing compound metabolism; protoporphyrin-IX biosynthesis; 5-aminolevulinate from L-glutamyl-tRNA(Glu): step 2/2.</text>
</comment>
<comment type="subunit">
    <text evidence="1">Homodimer.</text>
</comment>
<comment type="subcellular location">
    <subcellularLocation>
        <location evidence="1">Cytoplasm</location>
    </subcellularLocation>
</comment>
<comment type="similarity">
    <text evidence="1">Belongs to the class-III pyridoxal-phosphate-dependent aminotransferase family. HemL subfamily.</text>
</comment>
<proteinExistence type="inferred from homology"/>
<organism>
    <name type="scientific">Geobacillus thermodenitrificans (strain NG80-2)</name>
    <dbReference type="NCBI Taxonomy" id="420246"/>
    <lineage>
        <taxon>Bacteria</taxon>
        <taxon>Bacillati</taxon>
        <taxon>Bacillota</taxon>
        <taxon>Bacilli</taxon>
        <taxon>Bacillales</taxon>
        <taxon>Anoxybacillaceae</taxon>
        <taxon>Geobacillus</taxon>
    </lineage>
</organism>
<dbReference type="EC" id="5.4.3.8" evidence="1"/>
<dbReference type="EMBL" id="CP000557">
    <property type="protein sequence ID" value="ABO65865.1"/>
    <property type="molecule type" value="Genomic_DNA"/>
</dbReference>
<dbReference type="RefSeq" id="WP_008881541.1">
    <property type="nucleotide sequence ID" value="NC_009328.1"/>
</dbReference>
<dbReference type="SMR" id="A4IKL1"/>
<dbReference type="KEGG" id="gtn:GTNG_0483"/>
<dbReference type="eggNOG" id="COG0001">
    <property type="taxonomic scope" value="Bacteria"/>
</dbReference>
<dbReference type="HOGENOM" id="CLU_016922_1_5_9"/>
<dbReference type="UniPathway" id="UPA00251">
    <property type="reaction ID" value="UER00317"/>
</dbReference>
<dbReference type="Proteomes" id="UP000001578">
    <property type="component" value="Chromosome"/>
</dbReference>
<dbReference type="GO" id="GO:0005737">
    <property type="term" value="C:cytoplasm"/>
    <property type="evidence" value="ECO:0007669"/>
    <property type="project" value="UniProtKB-SubCell"/>
</dbReference>
<dbReference type="GO" id="GO:0042286">
    <property type="term" value="F:glutamate-1-semialdehyde 2,1-aminomutase activity"/>
    <property type="evidence" value="ECO:0007669"/>
    <property type="project" value="UniProtKB-UniRule"/>
</dbReference>
<dbReference type="GO" id="GO:0030170">
    <property type="term" value="F:pyridoxal phosphate binding"/>
    <property type="evidence" value="ECO:0007669"/>
    <property type="project" value="InterPro"/>
</dbReference>
<dbReference type="GO" id="GO:0008483">
    <property type="term" value="F:transaminase activity"/>
    <property type="evidence" value="ECO:0007669"/>
    <property type="project" value="InterPro"/>
</dbReference>
<dbReference type="GO" id="GO:0006782">
    <property type="term" value="P:protoporphyrinogen IX biosynthetic process"/>
    <property type="evidence" value="ECO:0007669"/>
    <property type="project" value="UniProtKB-UniRule"/>
</dbReference>
<dbReference type="CDD" id="cd00610">
    <property type="entry name" value="OAT_like"/>
    <property type="match status" value="1"/>
</dbReference>
<dbReference type="FunFam" id="3.40.640.10:FF:000021">
    <property type="entry name" value="Glutamate-1-semialdehyde 2,1-aminomutase"/>
    <property type="match status" value="1"/>
</dbReference>
<dbReference type="Gene3D" id="3.90.1150.10">
    <property type="entry name" value="Aspartate Aminotransferase, domain 1"/>
    <property type="match status" value="1"/>
</dbReference>
<dbReference type="Gene3D" id="3.40.640.10">
    <property type="entry name" value="Type I PLP-dependent aspartate aminotransferase-like (Major domain)"/>
    <property type="match status" value="1"/>
</dbReference>
<dbReference type="HAMAP" id="MF_00375">
    <property type="entry name" value="HemL_aminotrans_3"/>
    <property type="match status" value="1"/>
</dbReference>
<dbReference type="InterPro" id="IPR004639">
    <property type="entry name" value="4pyrrol_synth_GluAld_NH2Trfase"/>
</dbReference>
<dbReference type="InterPro" id="IPR005814">
    <property type="entry name" value="Aminotrans_3"/>
</dbReference>
<dbReference type="InterPro" id="IPR049704">
    <property type="entry name" value="Aminotrans_3_PPA_site"/>
</dbReference>
<dbReference type="InterPro" id="IPR015424">
    <property type="entry name" value="PyrdxlP-dep_Trfase"/>
</dbReference>
<dbReference type="InterPro" id="IPR015421">
    <property type="entry name" value="PyrdxlP-dep_Trfase_major"/>
</dbReference>
<dbReference type="InterPro" id="IPR015422">
    <property type="entry name" value="PyrdxlP-dep_Trfase_small"/>
</dbReference>
<dbReference type="NCBIfam" id="TIGR00713">
    <property type="entry name" value="hemL"/>
    <property type="match status" value="1"/>
</dbReference>
<dbReference type="NCBIfam" id="NF000818">
    <property type="entry name" value="PRK00062.1"/>
    <property type="match status" value="1"/>
</dbReference>
<dbReference type="NCBIfam" id="NF009055">
    <property type="entry name" value="PRK12389.1"/>
    <property type="match status" value="1"/>
</dbReference>
<dbReference type="PANTHER" id="PTHR43713">
    <property type="entry name" value="GLUTAMATE-1-SEMIALDEHYDE 2,1-AMINOMUTASE"/>
    <property type="match status" value="1"/>
</dbReference>
<dbReference type="PANTHER" id="PTHR43713:SF1">
    <property type="entry name" value="GLUTAMATE-1-SEMIALDEHYDE 2,1-AMINOMUTASE 2"/>
    <property type="match status" value="1"/>
</dbReference>
<dbReference type="Pfam" id="PF00202">
    <property type="entry name" value="Aminotran_3"/>
    <property type="match status" value="1"/>
</dbReference>
<dbReference type="SUPFAM" id="SSF53383">
    <property type="entry name" value="PLP-dependent transferases"/>
    <property type="match status" value="1"/>
</dbReference>
<dbReference type="PROSITE" id="PS00600">
    <property type="entry name" value="AA_TRANSFER_CLASS_3"/>
    <property type="match status" value="1"/>
</dbReference>
<name>GSA1_GEOTN</name>
<evidence type="ECO:0000255" key="1">
    <source>
        <dbReference type="HAMAP-Rule" id="MF_00375"/>
    </source>
</evidence>
<protein>
    <recommendedName>
        <fullName evidence="1">Glutamate-1-semialdehyde 2,1-aminomutase 1</fullName>
        <shortName evidence="1">GSA 1</shortName>
        <ecNumber evidence="1">5.4.3.8</ecNumber>
    </recommendedName>
    <alternativeName>
        <fullName evidence="1">Glutamate-1-semialdehyde aminotransferase 1</fullName>
        <shortName evidence="1">GSA-AT 1</shortName>
    </alternativeName>
</protein>
<feature type="chain" id="PRO_0000382319" description="Glutamate-1-semialdehyde 2,1-aminomutase 1">
    <location>
        <begin position="1"/>
        <end position="428"/>
    </location>
</feature>
<feature type="modified residue" description="N6-(pyridoxal phosphate)lysine" evidence="1">
    <location>
        <position position="268"/>
    </location>
</feature>
<reference key="1">
    <citation type="journal article" date="2007" name="Proc. Natl. Acad. Sci. U.S.A.">
        <title>Genome and proteome of long-chain alkane degrading Geobacillus thermodenitrificans NG80-2 isolated from a deep-subsurface oil reservoir.</title>
        <authorList>
            <person name="Feng L."/>
            <person name="Wang W."/>
            <person name="Cheng J."/>
            <person name="Ren Y."/>
            <person name="Zhao G."/>
            <person name="Gao C."/>
            <person name="Tang Y."/>
            <person name="Liu X."/>
            <person name="Han W."/>
            <person name="Peng X."/>
            <person name="Liu R."/>
            <person name="Wang L."/>
        </authorList>
    </citation>
    <scope>NUCLEOTIDE SEQUENCE [LARGE SCALE GENOMIC DNA]</scope>
    <source>
        <strain>NG80-2</strain>
    </source>
</reference>
<gene>
    <name evidence="1" type="primary">hemL1</name>
    <name type="ordered locus">GTNG_0483</name>
</gene>
<keyword id="KW-0963">Cytoplasm</keyword>
<keyword id="KW-0413">Isomerase</keyword>
<keyword id="KW-0627">Porphyrin biosynthesis</keyword>
<keyword id="KW-0663">Pyridoxal phosphate</keyword>
<accession>A4IKL1</accession>